<keyword id="KW-0963">Cytoplasm</keyword>
<keyword id="KW-0328">Glycosyltransferase</keyword>
<keyword id="KW-0660">Purine salvage</keyword>
<keyword id="KW-0808">Transferase</keyword>
<protein>
    <recommendedName>
        <fullName evidence="1">Adenine phosphoribosyltransferase</fullName>
        <shortName evidence="1">APRT</shortName>
        <ecNumber evidence="1">2.4.2.7</ecNumber>
    </recommendedName>
</protein>
<dbReference type="EC" id="2.4.2.7" evidence="1"/>
<dbReference type="EMBL" id="CP000036">
    <property type="protein sequence ID" value="ABB65081.1"/>
    <property type="molecule type" value="Genomic_DNA"/>
</dbReference>
<dbReference type="RefSeq" id="WP_000127356.1">
    <property type="nucleotide sequence ID" value="NC_007613.1"/>
</dbReference>
<dbReference type="SMR" id="Q325C7"/>
<dbReference type="GeneID" id="93776981"/>
<dbReference type="KEGG" id="sbo:SBO_0369"/>
<dbReference type="HOGENOM" id="CLU_063339_3_0_6"/>
<dbReference type="UniPathway" id="UPA00588">
    <property type="reaction ID" value="UER00646"/>
</dbReference>
<dbReference type="Proteomes" id="UP000007067">
    <property type="component" value="Chromosome"/>
</dbReference>
<dbReference type="GO" id="GO:0005737">
    <property type="term" value="C:cytoplasm"/>
    <property type="evidence" value="ECO:0007669"/>
    <property type="project" value="UniProtKB-SubCell"/>
</dbReference>
<dbReference type="GO" id="GO:0002055">
    <property type="term" value="F:adenine binding"/>
    <property type="evidence" value="ECO:0007669"/>
    <property type="project" value="TreeGrafter"/>
</dbReference>
<dbReference type="GO" id="GO:0003999">
    <property type="term" value="F:adenine phosphoribosyltransferase activity"/>
    <property type="evidence" value="ECO:0007669"/>
    <property type="project" value="UniProtKB-UniRule"/>
</dbReference>
<dbReference type="GO" id="GO:0016208">
    <property type="term" value="F:AMP binding"/>
    <property type="evidence" value="ECO:0007669"/>
    <property type="project" value="TreeGrafter"/>
</dbReference>
<dbReference type="GO" id="GO:0006168">
    <property type="term" value="P:adenine salvage"/>
    <property type="evidence" value="ECO:0007669"/>
    <property type="project" value="InterPro"/>
</dbReference>
<dbReference type="GO" id="GO:0044209">
    <property type="term" value="P:AMP salvage"/>
    <property type="evidence" value="ECO:0007669"/>
    <property type="project" value="UniProtKB-UniRule"/>
</dbReference>
<dbReference type="GO" id="GO:0006166">
    <property type="term" value="P:purine ribonucleoside salvage"/>
    <property type="evidence" value="ECO:0007669"/>
    <property type="project" value="UniProtKB-KW"/>
</dbReference>
<dbReference type="CDD" id="cd06223">
    <property type="entry name" value="PRTases_typeI"/>
    <property type="match status" value="1"/>
</dbReference>
<dbReference type="FunFam" id="3.40.50.2020:FF:000004">
    <property type="entry name" value="Adenine phosphoribosyltransferase"/>
    <property type="match status" value="1"/>
</dbReference>
<dbReference type="Gene3D" id="3.40.50.2020">
    <property type="match status" value="1"/>
</dbReference>
<dbReference type="HAMAP" id="MF_00004">
    <property type="entry name" value="Aden_phosphoribosyltr"/>
    <property type="match status" value="1"/>
</dbReference>
<dbReference type="InterPro" id="IPR005764">
    <property type="entry name" value="Ade_phspho_trans"/>
</dbReference>
<dbReference type="InterPro" id="IPR000836">
    <property type="entry name" value="PRibTrfase_dom"/>
</dbReference>
<dbReference type="InterPro" id="IPR029057">
    <property type="entry name" value="PRTase-like"/>
</dbReference>
<dbReference type="InterPro" id="IPR050054">
    <property type="entry name" value="UPRTase/APRTase"/>
</dbReference>
<dbReference type="NCBIfam" id="TIGR01090">
    <property type="entry name" value="apt"/>
    <property type="match status" value="1"/>
</dbReference>
<dbReference type="NCBIfam" id="NF002632">
    <property type="entry name" value="PRK02304.1-1"/>
    <property type="match status" value="1"/>
</dbReference>
<dbReference type="NCBIfam" id="NF002633">
    <property type="entry name" value="PRK02304.1-2"/>
    <property type="match status" value="1"/>
</dbReference>
<dbReference type="NCBIfam" id="NF002634">
    <property type="entry name" value="PRK02304.1-3"/>
    <property type="match status" value="1"/>
</dbReference>
<dbReference type="NCBIfam" id="NF002636">
    <property type="entry name" value="PRK02304.1-5"/>
    <property type="match status" value="1"/>
</dbReference>
<dbReference type="PANTHER" id="PTHR32315">
    <property type="entry name" value="ADENINE PHOSPHORIBOSYLTRANSFERASE"/>
    <property type="match status" value="1"/>
</dbReference>
<dbReference type="PANTHER" id="PTHR32315:SF3">
    <property type="entry name" value="ADENINE PHOSPHORIBOSYLTRANSFERASE"/>
    <property type="match status" value="1"/>
</dbReference>
<dbReference type="Pfam" id="PF00156">
    <property type="entry name" value="Pribosyltran"/>
    <property type="match status" value="1"/>
</dbReference>
<dbReference type="SUPFAM" id="SSF53271">
    <property type="entry name" value="PRTase-like"/>
    <property type="match status" value="1"/>
</dbReference>
<dbReference type="PROSITE" id="PS00103">
    <property type="entry name" value="PUR_PYR_PR_TRANSFER"/>
    <property type="match status" value="1"/>
</dbReference>
<comment type="function">
    <text evidence="1">Catalyzes a salvage reaction resulting in the formation of AMP, that is energically less costly than de novo synthesis.</text>
</comment>
<comment type="catalytic activity">
    <reaction evidence="1">
        <text>AMP + diphosphate = 5-phospho-alpha-D-ribose 1-diphosphate + adenine</text>
        <dbReference type="Rhea" id="RHEA:16609"/>
        <dbReference type="ChEBI" id="CHEBI:16708"/>
        <dbReference type="ChEBI" id="CHEBI:33019"/>
        <dbReference type="ChEBI" id="CHEBI:58017"/>
        <dbReference type="ChEBI" id="CHEBI:456215"/>
        <dbReference type="EC" id="2.4.2.7"/>
    </reaction>
</comment>
<comment type="pathway">
    <text evidence="1">Purine metabolism; AMP biosynthesis via salvage pathway; AMP from adenine: step 1/1.</text>
</comment>
<comment type="subunit">
    <text evidence="1">Homodimer.</text>
</comment>
<comment type="subcellular location">
    <subcellularLocation>
        <location evidence="1">Cytoplasm</location>
    </subcellularLocation>
</comment>
<comment type="similarity">
    <text evidence="1">Belongs to the purine/pyrimidine phosphoribosyltransferase family.</text>
</comment>
<proteinExistence type="inferred from homology"/>
<gene>
    <name evidence="1" type="primary">apt</name>
    <name type="ordered locus">SBO_0369</name>
</gene>
<name>APT_SHIBS</name>
<reference key="1">
    <citation type="journal article" date="2005" name="Nucleic Acids Res.">
        <title>Genome dynamics and diversity of Shigella species, the etiologic agents of bacillary dysentery.</title>
        <authorList>
            <person name="Yang F."/>
            <person name="Yang J."/>
            <person name="Zhang X."/>
            <person name="Chen L."/>
            <person name="Jiang Y."/>
            <person name="Yan Y."/>
            <person name="Tang X."/>
            <person name="Wang J."/>
            <person name="Xiong Z."/>
            <person name="Dong J."/>
            <person name="Xue Y."/>
            <person name="Zhu Y."/>
            <person name="Xu X."/>
            <person name="Sun L."/>
            <person name="Chen S."/>
            <person name="Nie H."/>
            <person name="Peng J."/>
            <person name="Xu J."/>
            <person name="Wang Y."/>
            <person name="Yuan Z."/>
            <person name="Wen Y."/>
            <person name="Yao Z."/>
            <person name="Shen Y."/>
            <person name="Qiang B."/>
            <person name="Hou Y."/>
            <person name="Yu J."/>
            <person name="Jin Q."/>
        </authorList>
    </citation>
    <scope>NUCLEOTIDE SEQUENCE [LARGE SCALE GENOMIC DNA]</scope>
    <source>
        <strain>Sb227</strain>
    </source>
</reference>
<feature type="chain" id="PRO_1000000338" description="Adenine phosphoribosyltransferase">
    <location>
        <begin position="1"/>
        <end position="183"/>
    </location>
</feature>
<organism>
    <name type="scientific">Shigella boydii serotype 4 (strain Sb227)</name>
    <dbReference type="NCBI Taxonomy" id="300268"/>
    <lineage>
        <taxon>Bacteria</taxon>
        <taxon>Pseudomonadati</taxon>
        <taxon>Pseudomonadota</taxon>
        <taxon>Gammaproteobacteria</taxon>
        <taxon>Enterobacterales</taxon>
        <taxon>Enterobacteriaceae</taxon>
        <taxon>Shigella</taxon>
    </lineage>
</organism>
<evidence type="ECO:0000255" key="1">
    <source>
        <dbReference type="HAMAP-Rule" id="MF_00004"/>
    </source>
</evidence>
<sequence>MTATAQQLEYLKNSIKSIQDYPKPGILFRDVTSLLEDPKAYALSIDLLVERYKNAGITKVVGTEARGFLFGAPVALGLGVGFVPVRKPGKLPRETISETYDLEYGTDQLEIHVDAIKPGDKVLVVDDLLATGGTIEATVKLIRRLGGEVADAAFIINLFDLGGEQRLEKQGITSYSLVPFPGH</sequence>
<accession>Q325C7</accession>